<organism>
    <name type="scientific">Pseudomonas fluorescens (strain ATCC BAA-477 / NRRL B-23932 / Pf-5)</name>
    <dbReference type="NCBI Taxonomy" id="220664"/>
    <lineage>
        <taxon>Bacteria</taxon>
        <taxon>Pseudomonadati</taxon>
        <taxon>Pseudomonadota</taxon>
        <taxon>Gammaproteobacteria</taxon>
        <taxon>Pseudomonadales</taxon>
        <taxon>Pseudomonadaceae</taxon>
        <taxon>Pseudomonas</taxon>
    </lineage>
</organism>
<accession>Q4KB60</accession>
<feature type="chain" id="PRO_0000225837" description="UPF0145 protein PFL_3418">
    <location>
        <begin position="1"/>
        <end position="106"/>
    </location>
</feature>
<gene>
    <name type="ordered locus">PFL_3418</name>
</gene>
<proteinExistence type="inferred from homology"/>
<reference key="1">
    <citation type="journal article" date="2005" name="Nat. Biotechnol.">
        <title>Complete genome sequence of the plant commensal Pseudomonas fluorescens Pf-5.</title>
        <authorList>
            <person name="Paulsen I.T."/>
            <person name="Press C.M."/>
            <person name="Ravel J."/>
            <person name="Kobayashi D.Y."/>
            <person name="Myers G.S.A."/>
            <person name="Mavrodi D.V."/>
            <person name="DeBoy R.T."/>
            <person name="Seshadri R."/>
            <person name="Ren Q."/>
            <person name="Madupu R."/>
            <person name="Dodson R.J."/>
            <person name="Durkin A.S."/>
            <person name="Brinkac L.M."/>
            <person name="Daugherty S.C."/>
            <person name="Sullivan S.A."/>
            <person name="Rosovitz M.J."/>
            <person name="Gwinn M.L."/>
            <person name="Zhou L."/>
            <person name="Schneider D.J."/>
            <person name="Cartinhour S.W."/>
            <person name="Nelson W.C."/>
            <person name="Weidman J."/>
            <person name="Watkins K."/>
            <person name="Tran K."/>
            <person name="Khouri H."/>
            <person name="Pierson E.A."/>
            <person name="Pierson L.S. III"/>
            <person name="Thomashow L.S."/>
            <person name="Loper J.E."/>
        </authorList>
    </citation>
    <scope>NUCLEOTIDE SEQUENCE [LARGE SCALE GENOMIC DNA]</scope>
    <source>
        <strain>ATCC BAA-477 / NRRL B-23932 / Pf-5</strain>
    </source>
</reference>
<name>Y3418_PSEF5</name>
<protein>
    <recommendedName>
        <fullName evidence="1">UPF0145 protein PFL_3418</fullName>
    </recommendedName>
</protein>
<evidence type="ECO:0000255" key="1">
    <source>
        <dbReference type="HAMAP-Rule" id="MF_00338"/>
    </source>
</evidence>
<sequence>MIVTTTAHIEGREIASYLDIVSAESVHGINVVRDLFAGMRDFFGGRSQTLERALKEARIQATNEIKERARQCNADAVVGVDFEISMPAGRGGMVVVFATGTAVRLK</sequence>
<comment type="similarity">
    <text evidence="1">Belongs to the UPF0145 family.</text>
</comment>
<dbReference type="EMBL" id="CP000076">
    <property type="protein sequence ID" value="AAY92687.1"/>
    <property type="molecule type" value="Genomic_DNA"/>
</dbReference>
<dbReference type="RefSeq" id="WP_011061700.1">
    <property type="nucleotide sequence ID" value="NC_004129.6"/>
</dbReference>
<dbReference type="SMR" id="Q4KB60"/>
<dbReference type="STRING" id="220664.PFL_3418"/>
<dbReference type="KEGG" id="pfl:PFL_3418"/>
<dbReference type="PATRIC" id="fig|220664.5.peg.3488"/>
<dbReference type="eggNOG" id="COG0393">
    <property type="taxonomic scope" value="Bacteria"/>
</dbReference>
<dbReference type="HOGENOM" id="CLU_117144_3_2_6"/>
<dbReference type="Proteomes" id="UP000008540">
    <property type="component" value="Chromosome"/>
</dbReference>
<dbReference type="Gene3D" id="3.30.110.70">
    <property type="entry name" value="Hypothetical protein apc22750. Chain B"/>
    <property type="match status" value="1"/>
</dbReference>
<dbReference type="HAMAP" id="MF_00338">
    <property type="entry name" value="UPF0145"/>
    <property type="match status" value="1"/>
</dbReference>
<dbReference type="InterPro" id="IPR035439">
    <property type="entry name" value="UPF0145_dom_sf"/>
</dbReference>
<dbReference type="InterPro" id="IPR002765">
    <property type="entry name" value="UPF0145_YbjQ-like"/>
</dbReference>
<dbReference type="PANTHER" id="PTHR34068">
    <property type="entry name" value="UPF0145 PROTEIN YBJQ"/>
    <property type="match status" value="1"/>
</dbReference>
<dbReference type="PANTHER" id="PTHR34068:SF1">
    <property type="entry name" value="UPF0145 PROTEIN YBJQ"/>
    <property type="match status" value="1"/>
</dbReference>
<dbReference type="Pfam" id="PF01906">
    <property type="entry name" value="YbjQ_1"/>
    <property type="match status" value="1"/>
</dbReference>
<dbReference type="SUPFAM" id="SSF117782">
    <property type="entry name" value="YbjQ-like"/>
    <property type="match status" value="1"/>
</dbReference>